<feature type="signal peptide" evidence="2">
    <location>
        <begin position="1"/>
        <end position="22"/>
    </location>
</feature>
<feature type="propeptide" id="PRO_0000415028" evidence="1">
    <location>
        <begin position="23"/>
        <end position="47"/>
    </location>
</feature>
<feature type="peptide" id="PRO_0000415029" description="Conotoxin Cl14.9" evidence="5">
    <location>
        <begin position="48"/>
        <end position="70"/>
    </location>
</feature>
<feature type="propeptide" id="PRO_0000415030" evidence="4">
    <location>
        <begin position="74"/>
        <end position="78"/>
    </location>
</feature>
<feature type="modified residue" description="Isoleucine amide" evidence="4">
    <location>
        <position position="70"/>
    </location>
</feature>
<name>CUE9_CONCL</name>
<protein>
    <recommendedName>
        <fullName evidence="3">Conotoxin Cl14.9</fullName>
    </recommendedName>
</protein>
<sequence length="78" mass="7985">MTAKATLLVLALVVMATSGVSSASVAGGPVVNSDTVSRSDPERLSTRGCVANCQANQTGIDCIKYCGIGIGRRDITQQ</sequence>
<dbReference type="EMBL" id="FJ959140">
    <property type="protein sequence ID" value="ADB93110.1"/>
    <property type="molecule type" value="Genomic_DNA"/>
</dbReference>
<dbReference type="ConoServer" id="4025">
    <property type="toxin name" value="Cal14.9 precursor"/>
</dbReference>
<dbReference type="GO" id="GO:0005576">
    <property type="term" value="C:extracellular region"/>
    <property type="evidence" value="ECO:0007669"/>
    <property type="project" value="UniProtKB-SubCell"/>
</dbReference>
<dbReference type="GO" id="GO:0090729">
    <property type="term" value="F:toxin activity"/>
    <property type="evidence" value="ECO:0007669"/>
    <property type="project" value="UniProtKB-KW"/>
</dbReference>
<evidence type="ECO:0000250" key="1"/>
<evidence type="ECO:0000255" key="2"/>
<evidence type="ECO:0000303" key="3">
    <source>
    </source>
</evidence>
<evidence type="ECO:0000305" key="4"/>
<evidence type="ECO:0000305" key="5">
    <source>
    </source>
</evidence>
<accession>D6C4J8</accession>
<reference key="1">
    <citation type="journal article" date="2010" name="Mol. Phylogenet. Evol.">
        <title>Evolution of Conus peptide toxins: analysis of Conus californicus Reeve, 1844.</title>
        <authorList>
            <person name="Biggs J.S."/>
            <person name="Watkins M."/>
            <person name="Puillandre N."/>
            <person name="Ownby J.P."/>
            <person name="Lopez-Vera E."/>
            <person name="Christensen S."/>
            <person name="Moreno K.J."/>
            <person name="Bernaldez J."/>
            <person name="Licea-Navarro A."/>
            <person name="Corneli P.S."/>
            <person name="Olivera B.M."/>
        </authorList>
    </citation>
    <scope>NUCLEOTIDE SEQUENCE [GENOMIC DNA]</scope>
</reference>
<proteinExistence type="inferred from homology"/>
<keyword id="KW-0027">Amidation</keyword>
<keyword id="KW-1015">Disulfide bond</keyword>
<keyword id="KW-0528">Neurotoxin</keyword>
<keyword id="KW-0964">Secreted</keyword>
<keyword id="KW-0732">Signal</keyword>
<keyword id="KW-0800">Toxin</keyword>
<organism>
    <name type="scientific">Californiconus californicus</name>
    <name type="common">California cone</name>
    <name type="synonym">Conus californicus</name>
    <dbReference type="NCBI Taxonomy" id="1736779"/>
    <lineage>
        <taxon>Eukaryota</taxon>
        <taxon>Metazoa</taxon>
        <taxon>Spiralia</taxon>
        <taxon>Lophotrochozoa</taxon>
        <taxon>Mollusca</taxon>
        <taxon>Gastropoda</taxon>
        <taxon>Caenogastropoda</taxon>
        <taxon>Neogastropoda</taxon>
        <taxon>Conoidea</taxon>
        <taxon>Conidae</taxon>
        <taxon>Californiconus</taxon>
    </lineage>
</organism>
<comment type="subcellular location">
    <subcellularLocation>
        <location evidence="4">Secreted</location>
    </subcellularLocation>
</comment>
<comment type="tissue specificity">
    <text evidence="4">Expressed by the venom duct.</text>
</comment>
<comment type="domain">
    <text evidence="4">The cysteine framework is XIV (C-C-C-C).</text>
</comment>
<comment type="PTM">
    <text evidence="4">Contains 2 disulfide bonds.</text>
</comment>